<comment type="function">
    <text evidence="1">Essential for the assembly of ubiquinol-cytochrome c reductase. It has a direct effect on the correct occurrence of the Rieske protein, core 4, core 5 and apocytochrome b (By similarity).</text>
</comment>
<comment type="subcellular location">
    <subcellularLocation>
        <location evidence="1">Mitochondrion inner membrane</location>
        <topology evidence="1">Single-pass membrane protein</topology>
    </subcellularLocation>
</comment>
<comment type="similarity">
    <text evidence="3">Belongs to the CBP4 family.</text>
</comment>
<accession>Q6FVS6</accession>
<evidence type="ECO:0000250" key="1"/>
<evidence type="ECO:0000255" key="2"/>
<evidence type="ECO:0000305" key="3"/>
<feature type="chain" id="PRO_0000330124" description="Assembly factor CBP4">
    <location>
        <begin position="1"/>
        <end position="152"/>
    </location>
</feature>
<feature type="transmembrane region" description="Helical" evidence="2">
    <location>
        <begin position="5"/>
        <end position="27"/>
    </location>
</feature>
<feature type="coiled-coil region" evidence="2">
    <location>
        <begin position="105"/>
        <end position="139"/>
    </location>
</feature>
<gene>
    <name type="primary">CBP4</name>
    <name type="ordered locus">CAGL0D05962g</name>
</gene>
<dbReference type="EMBL" id="CR380950">
    <property type="protein sequence ID" value="CAG58579.1"/>
    <property type="molecule type" value="Genomic_DNA"/>
</dbReference>
<dbReference type="RefSeq" id="XP_445668.1">
    <property type="nucleotide sequence ID" value="XM_445668.1"/>
</dbReference>
<dbReference type="SMR" id="Q6FVS6"/>
<dbReference type="FunCoup" id="Q6FVS6">
    <property type="interactions" value="54"/>
</dbReference>
<dbReference type="STRING" id="284593.Q6FVS6"/>
<dbReference type="EnsemblFungi" id="CAGL0D05962g-T">
    <property type="protein sequence ID" value="CAGL0D05962g-T-p1"/>
    <property type="gene ID" value="CAGL0D05962g"/>
</dbReference>
<dbReference type="KEGG" id="cgr:2887002"/>
<dbReference type="CGD" id="CAL0127943">
    <property type="gene designation" value="CAGL0D05962g"/>
</dbReference>
<dbReference type="VEuPathDB" id="FungiDB:CAGL0D05962g"/>
<dbReference type="eggNOG" id="ENOG502S2G8">
    <property type="taxonomic scope" value="Eukaryota"/>
</dbReference>
<dbReference type="HOGENOM" id="CLU_147520_0_0_1"/>
<dbReference type="InParanoid" id="Q6FVS6"/>
<dbReference type="OMA" id="KDPIWKT"/>
<dbReference type="Proteomes" id="UP000002428">
    <property type="component" value="Chromosome D"/>
</dbReference>
<dbReference type="GO" id="GO:0005743">
    <property type="term" value="C:mitochondrial inner membrane"/>
    <property type="evidence" value="ECO:0007669"/>
    <property type="project" value="UniProtKB-SubCell"/>
</dbReference>
<dbReference type="GO" id="GO:0003779">
    <property type="term" value="F:actin binding"/>
    <property type="evidence" value="ECO:0007669"/>
    <property type="project" value="InterPro"/>
</dbReference>
<dbReference type="GO" id="GO:0034551">
    <property type="term" value="P:mitochondrial respiratory chain complex III assembly"/>
    <property type="evidence" value="ECO:0007669"/>
    <property type="project" value="TreeGrafter"/>
</dbReference>
<dbReference type="InterPro" id="IPR012420">
    <property type="entry name" value="Cbp4"/>
</dbReference>
<dbReference type="InterPro" id="IPR008954">
    <property type="entry name" value="Moesin_tail_sf"/>
</dbReference>
<dbReference type="PANTHER" id="PTHR28202">
    <property type="entry name" value="ASSEMBLY FACTOR CBP4"/>
    <property type="match status" value="1"/>
</dbReference>
<dbReference type="PANTHER" id="PTHR28202:SF1">
    <property type="entry name" value="ASSEMBLY FACTOR CBP4"/>
    <property type="match status" value="1"/>
</dbReference>
<dbReference type="Pfam" id="PF07960">
    <property type="entry name" value="CBP4"/>
    <property type="match status" value="1"/>
</dbReference>
<dbReference type="SUPFAM" id="SSF48678">
    <property type="entry name" value="Moesin tail domain"/>
    <property type="match status" value="1"/>
</dbReference>
<proteinExistence type="inferred from homology"/>
<keyword id="KW-0143">Chaperone</keyword>
<keyword id="KW-0175">Coiled coil</keyword>
<keyword id="KW-0472">Membrane</keyword>
<keyword id="KW-0496">Mitochondrion</keyword>
<keyword id="KW-0999">Mitochondrion inner membrane</keyword>
<keyword id="KW-1185">Reference proteome</keyword>
<keyword id="KW-0812">Transmembrane</keyword>
<keyword id="KW-1133">Transmembrane helix</keyword>
<reference key="1">
    <citation type="journal article" date="2004" name="Nature">
        <title>Genome evolution in yeasts.</title>
        <authorList>
            <person name="Dujon B."/>
            <person name="Sherman D."/>
            <person name="Fischer G."/>
            <person name="Durrens P."/>
            <person name="Casaregola S."/>
            <person name="Lafontaine I."/>
            <person name="de Montigny J."/>
            <person name="Marck C."/>
            <person name="Neuveglise C."/>
            <person name="Talla E."/>
            <person name="Goffard N."/>
            <person name="Frangeul L."/>
            <person name="Aigle M."/>
            <person name="Anthouard V."/>
            <person name="Babour A."/>
            <person name="Barbe V."/>
            <person name="Barnay S."/>
            <person name="Blanchin S."/>
            <person name="Beckerich J.-M."/>
            <person name="Beyne E."/>
            <person name="Bleykasten C."/>
            <person name="Boisrame A."/>
            <person name="Boyer J."/>
            <person name="Cattolico L."/>
            <person name="Confanioleri F."/>
            <person name="de Daruvar A."/>
            <person name="Despons L."/>
            <person name="Fabre E."/>
            <person name="Fairhead C."/>
            <person name="Ferry-Dumazet H."/>
            <person name="Groppi A."/>
            <person name="Hantraye F."/>
            <person name="Hennequin C."/>
            <person name="Jauniaux N."/>
            <person name="Joyet P."/>
            <person name="Kachouri R."/>
            <person name="Kerrest A."/>
            <person name="Koszul R."/>
            <person name="Lemaire M."/>
            <person name="Lesur I."/>
            <person name="Ma L."/>
            <person name="Muller H."/>
            <person name="Nicaud J.-M."/>
            <person name="Nikolski M."/>
            <person name="Oztas S."/>
            <person name="Ozier-Kalogeropoulos O."/>
            <person name="Pellenz S."/>
            <person name="Potier S."/>
            <person name="Richard G.-F."/>
            <person name="Straub M.-L."/>
            <person name="Suleau A."/>
            <person name="Swennen D."/>
            <person name="Tekaia F."/>
            <person name="Wesolowski-Louvel M."/>
            <person name="Westhof E."/>
            <person name="Wirth B."/>
            <person name="Zeniou-Meyer M."/>
            <person name="Zivanovic Y."/>
            <person name="Bolotin-Fukuhara M."/>
            <person name="Thierry A."/>
            <person name="Bouchier C."/>
            <person name="Caudron B."/>
            <person name="Scarpelli C."/>
            <person name="Gaillardin C."/>
            <person name="Weissenbach J."/>
            <person name="Wincker P."/>
            <person name="Souciet J.-L."/>
        </authorList>
    </citation>
    <scope>NUCLEOTIDE SEQUENCE [LARGE SCALE GENOMIC DNA]</scope>
    <source>
        <strain>ATCC 2001 / BCRC 20586 / JCM 3761 / NBRC 0622 / NRRL Y-65 / CBS 138</strain>
    </source>
</reference>
<sequence length="152" mass="18199">MDTPVWRRWLKIYIYGGSIILGGVLLFKYTTPTDEKLIASLSPELRLQYEKERKLRQEEQRELMRIVQETAKSNEPIWKTGPIDSPWEKKKGGEVVKNENFFDKIQKTRAEEAQKDELQRIREELDSLRAQSMKKTSDIVNERKSKDWWKIW</sequence>
<name>CBP4_CANGA</name>
<protein>
    <recommendedName>
        <fullName>Assembly factor CBP4</fullName>
    </recommendedName>
    <alternativeName>
        <fullName>Cytochrome b mRNA-processing protein 4</fullName>
    </alternativeName>
</protein>
<organism>
    <name type="scientific">Candida glabrata (strain ATCC 2001 / BCRC 20586 / JCM 3761 / NBRC 0622 / NRRL Y-65 / CBS 138)</name>
    <name type="common">Yeast</name>
    <name type="synonym">Nakaseomyces glabratus</name>
    <dbReference type="NCBI Taxonomy" id="284593"/>
    <lineage>
        <taxon>Eukaryota</taxon>
        <taxon>Fungi</taxon>
        <taxon>Dikarya</taxon>
        <taxon>Ascomycota</taxon>
        <taxon>Saccharomycotina</taxon>
        <taxon>Saccharomycetes</taxon>
        <taxon>Saccharomycetales</taxon>
        <taxon>Saccharomycetaceae</taxon>
        <taxon>Nakaseomyces</taxon>
    </lineage>
</organism>